<evidence type="ECO:0000250" key="1">
    <source>
        <dbReference type="UniProtKB" id="Q8L9J7"/>
    </source>
</evidence>
<evidence type="ECO:0000255" key="2"/>
<evidence type="ECO:0000305" key="3"/>
<keyword id="KW-1003">Cell membrane</keyword>
<keyword id="KW-0472">Membrane</keyword>
<keyword id="KW-1185">Reference proteome</keyword>
<keyword id="KW-0677">Repeat</keyword>
<keyword id="KW-0762">Sugar transport</keyword>
<keyword id="KW-0812">Transmembrane</keyword>
<keyword id="KW-1133">Transmembrane helix</keyword>
<keyword id="KW-0813">Transport</keyword>
<comment type="function">
    <text evidence="1">Mediates both low-affinity uptake and efflux of sugar across the plasma membrane.</text>
</comment>
<comment type="subunit">
    <text evidence="1">Forms homooligomers and/or heterooligomers.</text>
</comment>
<comment type="subcellular location">
    <subcellularLocation>
        <location evidence="1">Cell membrane</location>
        <topology evidence="1">Multi-pass membrane protein</topology>
    </subcellularLocation>
</comment>
<comment type="similarity">
    <text evidence="3">Belongs to the SWEET sugar transporter family.</text>
</comment>
<protein>
    <recommendedName>
        <fullName>Bidirectional sugar transporter SWEET6a</fullName>
        <shortName>OsSWEET6a</shortName>
    </recommendedName>
</protein>
<dbReference type="EMBL" id="CM000126">
    <property type="protein sequence ID" value="EAY74884.1"/>
    <property type="molecule type" value="Genomic_DNA"/>
</dbReference>
<dbReference type="SMR" id="A2WSD8"/>
<dbReference type="STRING" id="39946.A2WSD8"/>
<dbReference type="EnsemblPlants" id="BGIOSGA003951-TA">
    <property type="protein sequence ID" value="BGIOSGA003951-PA"/>
    <property type="gene ID" value="BGIOSGA003951"/>
</dbReference>
<dbReference type="Gramene" id="BGIOSGA003951-TA">
    <property type="protein sequence ID" value="BGIOSGA003951-PA"/>
    <property type="gene ID" value="BGIOSGA003951"/>
</dbReference>
<dbReference type="HOGENOM" id="CLU_048643_1_0_1"/>
<dbReference type="OMA" id="LWLIGEM"/>
<dbReference type="Proteomes" id="UP000007015">
    <property type="component" value="Chromosome 1"/>
</dbReference>
<dbReference type="GO" id="GO:0005886">
    <property type="term" value="C:plasma membrane"/>
    <property type="evidence" value="ECO:0000250"/>
    <property type="project" value="UniProtKB"/>
</dbReference>
<dbReference type="GO" id="GO:0051119">
    <property type="term" value="F:sugar transmembrane transporter activity"/>
    <property type="evidence" value="ECO:0000250"/>
    <property type="project" value="UniProtKB"/>
</dbReference>
<dbReference type="FunFam" id="1.20.1280.290:FF:000001">
    <property type="entry name" value="Bidirectional sugar transporter SWEET"/>
    <property type="match status" value="1"/>
</dbReference>
<dbReference type="FunFam" id="1.20.1280.290:FF:000002">
    <property type="entry name" value="Bidirectional sugar transporter SWEET"/>
    <property type="match status" value="1"/>
</dbReference>
<dbReference type="Gene3D" id="1.20.1280.290">
    <property type="match status" value="2"/>
</dbReference>
<dbReference type="InterPro" id="IPR047664">
    <property type="entry name" value="SWEET"/>
</dbReference>
<dbReference type="InterPro" id="IPR004316">
    <property type="entry name" value="SWEET_rpt"/>
</dbReference>
<dbReference type="PANTHER" id="PTHR10791">
    <property type="entry name" value="RAG1-ACTIVATING PROTEIN 1"/>
    <property type="match status" value="1"/>
</dbReference>
<dbReference type="PANTHER" id="PTHR10791:SF30">
    <property type="entry name" value="SUGAR TRANSPORTER SWEET1"/>
    <property type="match status" value="1"/>
</dbReference>
<dbReference type="Pfam" id="PF03083">
    <property type="entry name" value="MtN3_slv"/>
    <property type="match status" value="2"/>
</dbReference>
<organism>
    <name type="scientific">Oryza sativa subsp. indica</name>
    <name type="common">Rice</name>
    <dbReference type="NCBI Taxonomy" id="39946"/>
    <lineage>
        <taxon>Eukaryota</taxon>
        <taxon>Viridiplantae</taxon>
        <taxon>Streptophyta</taxon>
        <taxon>Embryophyta</taxon>
        <taxon>Tracheophyta</taxon>
        <taxon>Spermatophyta</taxon>
        <taxon>Magnoliopsida</taxon>
        <taxon>Liliopsida</taxon>
        <taxon>Poales</taxon>
        <taxon>Poaceae</taxon>
        <taxon>BOP clade</taxon>
        <taxon>Oryzoideae</taxon>
        <taxon>Oryzeae</taxon>
        <taxon>Oryzinae</taxon>
        <taxon>Oryza</taxon>
        <taxon>Oryza sativa</taxon>
    </lineage>
</organism>
<proteinExistence type="inferred from homology"/>
<accession>A2WSD8</accession>
<reference key="1">
    <citation type="journal article" date="2005" name="PLoS Biol.">
        <title>The genomes of Oryza sativa: a history of duplications.</title>
        <authorList>
            <person name="Yu J."/>
            <person name="Wang J."/>
            <person name="Lin W."/>
            <person name="Li S."/>
            <person name="Li H."/>
            <person name="Zhou J."/>
            <person name="Ni P."/>
            <person name="Dong W."/>
            <person name="Hu S."/>
            <person name="Zeng C."/>
            <person name="Zhang J."/>
            <person name="Zhang Y."/>
            <person name="Li R."/>
            <person name="Xu Z."/>
            <person name="Li S."/>
            <person name="Li X."/>
            <person name="Zheng H."/>
            <person name="Cong L."/>
            <person name="Lin L."/>
            <person name="Yin J."/>
            <person name="Geng J."/>
            <person name="Li G."/>
            <person name="Shi J."/>
            <person name="Liu J."/>
            <person name="Lv H."/>
            <person name="Li J."/>
            <person name="Wang J."/>
            <person name="Deng Y."/>
            <person name="Ran L."/>
            <person name="Shi X."/>
            <person name="Wang X."/>
            <person name="Wu Q."/>
            <person name="Li C."/>
            <person name="Ren X."/>
            <person name="Wang J."/>
            <person name="Wang X."/>
            <person name="Li D."/>
            <person name="Liu D."/>
            <person name="Zhang X."/>
            <person name="Ji Z."/>
            <person name="Zhao W."/>
            <person name="Sun Y."/>
            <person name="Zhang Z."/>
            <person name="Bao J."/>
            <person name="Han Y."/>
            <person name="Dong L."/>
            <person name="Ji J."/>
            <person name="Chen P."/>
            <person name="Wu S."/>
            <person name="Liu J."/>
            <person name="Xiao Y."/>
            <person name="Bu D."/>
            <person name="Tan J."/>
            <person name="Yang L."/>
            <person name="Ye C."/>
            <person name="Zhang J."/>
            <person name="Xu J."/>
            <person name="Zhou Y."/>
            <person name="Yu Y."/>
            <person name="Zhang B."/>
            <person name="Zhuang S."/>
            <person name="Wei H."/>
            <person name="Liu B."/>
            <person name="Lei M."/>
            <person name="Yu H."/>
            <person name="Li Y."/>
            <person name="Xu H."/>
            <person name="Wei S."/>
            <person name="He X."/>
            <person name="Fang L."/>
            <person name="Zhang Z."/>
            <person name="Zhang Y."/>
            <person name="Huang X."/>
            <person name="Su Z."/>
            <person name="Tong W."/>
            <person name="Li J."/>
            <person name="Tong Z."/>
            <person name="Li S."/>
            <person name="Ye J."/>
            <person name="Wang L."/>
            <person name="Fang L."/>
            <person name="Lei T."/>
            <person name="Chen C.-S."/>
            <person name="Chen H.-C."/>
            <person name="Xu Z."/>
            <person name="Li H."/>
            <person name="Huang H."/>
            <person name="Zhang F."/>
            <person name="Xu H."/>
            <person name="Li N."/>
            <person name="Zhao C."/>
            <person name="Li S."/>
            <person name="Dong L."/>
            <person name="Huang Y."/>
            <person name="Li L."/>
            <person name="Xi Y."/>
            <person name="Qi Q."/>
            <person name="Li W."/>
            <person name="Zhang B."/>
            <person name="Hu W."/>
            <person name="Zhang Y."/>
            <person name="Tian X."/>
            <person name="Jiao Y."/>
            <person name="Liang X."/>
            <person name="Jin J."/>
            <person name="Gao L."/>
            <person name="Zheng W."/>
            <person name="Hao B."/>
            <person name="Liu S.-M."/>
            <person name="Wang W."/>
            <person name="Yuan L."/>
            <person name="Cao M."/>
            <person name="McDermott J."/>
            <person name="Samudrala R."/>
            <person name="Wang J."/>
            <person name="Wong G.K.-S."/>
            <person name="Yang H."/>
        </authorList>
    </citation>
    <scope>NUCLEOTIDE SEQUENCE [LARGE SCALE GENOMIC DNA]</scope>
    <source>
        <strain>cv. 93-11</strain>
    </source>
</reference>
<feature type="chain" id="PRO_0000404143" description="Bidirectional sugar transporter SWEET6a">
    <location>
        <begin position="1"/>
        <end position="259"/>
    </location>
</feature>
<feature type="topological domain" description="Extracellular" evidence="2">
    <location>
        <begin position="1"/>
        <end position="9"/>
    </location>
</feature>
<feature type="transmembrane region" description="Helical; Name=1" evidence="2">
    <location>
        <begin position="10"/>
        <end position="30"/>
    </location>
</feature>
<feature type="topological domain" description="Cytoplasmic" evidence="2">
    <location>
        <begin position="31"/>
        <end position="45"/>
    </location>
</feature>
<feature type="transmembrane region" description="Helical; Name=2" evidence="2">
    <location>
        <begin position="46"/>
        <end position="66"/>
    </location>
</feature>
<feature type="topological domain" description="Extracellular" evidence="2">
    <location>
        <begin position="67"/>
        <end position="69"/>
    </location>
</feature>
<feature type="transmembrane region" description="Helical; Name=3" evidence="2">
    <location>
        <begin position="70"/>
        <end position="90"/>
    </location>
</feature>
<feature type="topological domain" description="Cytoplasmic" evidence="2">
    <location>
        <begin position="91"/>
        <end position="103"/>
    </location>
</feature>
<feature type="transmembrane region" description="Helical; Name=4" evidence="2">
    <location>
        <begin position="104"/>
        <end position="124"/>
    </location>
</feature>
<feature type="topological domain" description="Extracellular" evidence="2">
    <location>
        <begin position="125"/>
        <end position="131"/>
    </location>
</feature>
<feature type="transmembrane region" description="Helical; Name=5" evidence="2">
    <location>
        <begin position="132"/>
        <end position="152"/>
    </location>
</feature>
<feature type="topological domain" description="Cytoplasmic" evidence="2">
    <location>
        <begin position="153"/>
        <end position="165"/>
    </location>
</feature>
<feature type="transmembrane region" description="Helical; Name=6" evidence="2">
    <location>
        <begin position="166"/>
        <end position="186"/>
    </location>
</feature>
<feature type="topological domain" description="Extracellular" evidence="2">
    <location>
        <begin position="187"/>
        <end position="189"/>
    </location>
</feature>
<feature type="transmembrane region" description="Helical; Name=7" evidence="2">
    <location>
        <begin position="190"/>
        <end position="210"/>
    </location>
</feature>
<feature type="topological domain" description="Cytoplasmic" evidence="2">
    <location>
        <begin position="211"/>
        <end position="259"/>
    </location>
</feature>
<feature type="domain" description="MtN3/slv 1">
    <location>
        <begin position="10"/>
        <end position="98"/>
    </location>
</feature>
<feature type="domain" description="MtN3/slv 2">
    <location>
        <begin position="133"/>
        <end position="216"/>
    </location>
</feature>
<sequence>MISPDAARNVVGIIGNVISFGLFLAPVPTFWRICKRKDVEEFKADPYLATLLNCMLWVFYGIPVVHPNSILVVTINGIGLLVEGTYLLIFFLYSPNKKRLRMCAVLGVELVFMLAVILGVLLGAHTHEKRSMIVGILCVFFGSIMYFSPLTIMGKVIKTKSVEYMPFFLSLVCFLNGVCWTAYALIRFDIYVTIPNGLGALFGAIQLILYACYYRTTPKKTKAAKDVEMPSVVVSGTGAAAAAGGGNTGGGSISVTVER</sequence>
<name>SWT6A_ORYSI</name>
<gene>
    <name type="primary">SWEET6A</name>
    <name type="ORF">OsI_02773</name>
</gene>